<name>GPDA_HELAH</name>
<gene>
    <name evidence="1" type="primary">gpsA</name>
    <name type="ordered locus">Hac_1037</name>
</gene>
<reference key="1">
    <citation type="journal article" date="2006" name="PLoS Genet.">
        <title>Who ate whom? Adaptive Helicobacter genomic changes that accompanied a host jump from early humans to large felines.</title>
        <authorList>
            <person name="Eppinger M."/>
            <person name="Baar C."/>
            <person name="Linz B."/>
            <person name="Raddatz G."/>
            <person name="Lanz C."/>
            <person name="Keller H."/>
            <person name="Morelli G."/>
            <person name="Gressmann H."/>
            <person name="Achtman M."/>
            <person name="Schuster S.C."/>
        </authorList>
    </citation>
    <scope>NUCLEOTIDE SEQUENCE [LARGE SCALE GENOMIC DNA]</scope>
    <source>
        <strain>Sheeba</strain>
    </source>
</reference>
<proteinExistence type="inferred from homology"/>
<comment type="function">
    <text evidence="1">Catalyzes the reduction of the glycolytic intermediate dihydroxyacetone phosphate (DHAP) to sn-glycerol 3-phosphate (G3P), the key precursor for phospholipid synthesis.</text>
</comment>
<comment type="catalytic activity">
    <reaction evidence="1">
        <text>sn-glycerol 3-phosphate + NAD(+) = dihydroxyacetone phosphate + NADH + H(+)</text>
        <dbReference type="Rhea" id="RHEA:11092"/>
        <dbReference type="ChEBI" id="CHEBI:15378"/>
        <dbReference type="ChEBI" id="CHEBI:57540"/>
        <dbReference type="ChEBI" id="CHEBI:57597"/>
        <dbReference type="ChEBI" id="CHEBI:57642"/>
        <dbReference type="ChEBI" id="CHEBI:57945"/>
        <dbReference type="EC" id="1.1.1.94"/>
    </reaction>
    <physiologicalReaction direction="right-to-left" evidence="1">
        <dbReference type="Rhea" id="RHEA:11094"/>
    </physiologicalReaction>
</comment>
<comment type="catalytic activity">
    <reaction evidence="1">
        <text>sn-glycerol 3-phosphate + NADP(+) = dihydroxyacetone phosphate + NADPH + H(+)</text>
        <dbReference type="Rhea" id="RHEA:11096"/>
        <dbReference type="ChEBI" id="CHEBI:15378"/>
        <dbReference type="ChEBI" id="CHEBI:57597"/>
        <dbReference type="ChEBI" id="CHEBI:57642"/>
        <dbReference type="ChEBI" id="CHEBI:57783"/>
        <dbReference type="ChEBI" id="CHEBI:58349"/>
        <dbReference type="EC" id="1.1.1.94"/>
    </reaction>
    <physiologicalReaction direction="right-to-left" evidence="1">
        <dbReference type="Rhea" id="RHEA:11098"/>
    </physiologicalReaction>
</comment>
<comment type="pathway">
    <text evidence="1">Membrane lipid metabolism; glycerophospholipid metabolism.</text>
</comment>
<comment type="subcellular location">
    <subcellularLocation>
        <location evidence="1">Cytoplasm</location>
    </subcellularLocation>
</comment>
<comment type="similarity">
    <text evidence="1">Belongs to the NAD-dependent glycerol-3-phosphate dehydrogenase family.</text>
</comment>
<protein>
    <recommendedName>
        <fullName evidence="1">Glycerol-3-phosphate dehydrogenase [NAD(P)+]</fullName>
        <ecNumber evidence="1">1.1.1.94</ecNumber>
    </recommendedName>
    <alternativeName>
        <fullName evidence="1">NAD(P)(+)-dependent glycerol-3-phosphate dehydrogenase</fullName>
    </alternativeName>
    <alternativeName>
        <fullName evidence="1">NAD(P)H-dependent dihydroxyacetone-phosphate reductase</fullName>
    </alternativeName>
</protein>
<keyword id="KW-0963">Cytoplasm</keyword>
<keyword id="KW-0444">Lipid biosynthesis</keyword>
<keyword id="KW-0443">Lipid metabolism</keyword>
<keyword id="KW-0520">NAD</keyword>
<keyword id="KW-0521">NADP</keyword>
<keyword id="KW-0547">Nucleotide-binding</keyword>
<keyword id="KW-0560">Oxidoreductase</keyword>
<keyword id="KW-0594">Phospholipid biosynthesis</keyword>
<keyword id="KW-1208">Phospholipid metabolism</keyword>
<feature type="chain" id="PRO_1000049511" description="Glycerol-3-phosphate dehydrogenase [NAD(P)+]">
    <location>
        <begin position="1"/>
        <end position="312"/>
    </location>
</feature>
<feature type="active site" description="Proton acceptor" evidence="1">
    <location>
        <position position="177"/>
    </location>
</feature>
<feature type="binding site" evidence="1">
    <location>
        <position position="11"/>
    </location>
    <ligand>
        <name>NADPH</name>
        <dbReference type="ChEBI" id="CHEBI:57783"/>
    </ligand>
</feature>
<feature type="binding site" evidence="1">
    <location>
        <position position="30"/>
    </location>
    <ligand>
        <name>NADPH</name>
        <dbReference type="ChEBI" id="CHEBI:57783"/>
    </ligand>
</feature>
<feature type="binding site" evidence="1">
    <location>
        <position position="31"/>
    </location>
    <ligand>
        <name>NADPH</name>
        <dbReference type="ChEBI" id="CHEBI:57783"/>
    </ligand>
</feature>
<feature type="binding site" evidence="1">
    <location>
        <position position="95"/>
    </location>
    <ligand>
        <name>NADPH</name>
        <dbReference type="ChEBI" id="CHEBI:57783"/>
    </ligand>
</feature>
<feature type="binding site" evidence="1">
    <location>
        <position position="95"/>
    </location>
    <ligand>
        <name>sn-glycerol 3-phosphate</name>
        <dbReference type="ChEBI" id="CHEBI:57597"/>
    </ligand>
</feature>
<feature type="binding site" evidence="1">
    <location>
        <position position="123"/>
    </location>
    <ligand>
        <name>sn-glycerol 3-phosphate</name>
        <dbReference type="ChEBI" id="CHEBI:57597"/>
    </ligand>
</feature>
<feature type="binding site" evidence="1">
    <location>
        <position position="125"/>
    </location>
    <ligand>
        <name>sn-glycerol 3-phosphate</name>
        <dbReference type="ChEBI" id="CHEBI:57597"/>
    </ligand>
</feature>
<feature type="binding site" evidence="1">
    <location>
        <position position="127"/>
    </location>
    <ligand>
        <name>NADPH</name>
        <dbReference type="ChEBI" id="CHEBI:57783"/>
    </ligand>
</feature>
<feature type="binding site" evidence="1">
    <location>
        <position position="177"/>
    </location>
    <ligand>
        <name>sn-glycerol 3-phosphate</name>
        <dbReference type="ChEBI" id="CHEBI:57597"/>
    </ligand>
</feature>
<feature type="binding site" evidence="1">
    <location>
        <position position="230"/>
    </location>
    <ligand>
        <name>sn-glycerol 3-phosphate</name>
        <dbReference type="ChEBI" id="CHEBI:57597"/>
    </ligand>
</feature>
<feature type="binding site" evidence="1">
    <location>
        <position position="240"/>
    </location>
    <ligand>
        <name>sn-glycerol 3-phosphate</name>
        <dbReference type="ChEBI" id="CHEBI:57597"/>
    </ligand>
</feature>
<feature type="binding site" evidence="1">
    <location>
        <position position="241"/>
    </location>
    <ligand>
        <name>NADPH</name>
        <dbReference type="ChEBI" id="CHEBI:57783"/>
    </ligand>
</feature>
<feature type="binding site" evidence="1">
    <location>
        <position position="241"/>
    </location>
    <ligand>
        <name>sn-glycerol 3-phosphate</name>
        <dbReference type="ChEBI" id="CHEBI:57597"/>
    </ligand>
</feature>
<feature type="binding site" evidence="1">
    <location>
        <position position="242"/>
    </location>
    <ligand>
        <name>sn-glycerol 3-phosphate</name>
        <dbReference type="ChEBI" id="CHEBI:57597"/>
    </ligand>
</feature>
<feature type="binding site" evidence="1">
    <location>
        <position position="265"/>
    </location>
    <ligand>
        <name>NADPH</name>
        <dbReference type="ChEBI" id="CHEBI:57783"/>
    </ligand>
</feature>
<feature type="binding site" evidence="1">
    <location>
        <position position="267"/>
    </location>
    <ligand>
        <name>NADPH</name>
        <dbReference type="ChEBI" id="CHEBI:57783"/>
    </ligand>
</feature>
<dbReference type="EC" id="1.1.1.94" evidence="1"/>
<dbReference type="EMBL" id="AM260522">
    <property type="protein sequence ID" value="CAJ99801.1"/>
    <property type="molecule type" value="Genomic_DNA"/>
</dbReference>
<dbReference type="RefSeq" id="WP_011577911.1">
    <property type="nucleotide sequence ID" value="NC_008229.1"/>
</dbReference>
<dbReference type="SMR" id="Q17X25"/>
<dbReference type="STRING" id="382638.Hac_1037"/>
<dbReference type="GeneID" id="31758410"/>
<dbReference type="KEGG" id="hac:Hac_1037"/>
<dbReference type="eggNOG" id="COG0240">
    <property type="taxonomic scope" value="Bacteria"/>
</dbReference>
<dbReference type="HOGENOM" id="CLU_033449_0_2_7"/>
<dbReference type="OrthoDB" id="9812273at2"/>
<dbReference type="BioCyc" id="HACI382638:HAC_RS04450-MONOMER"/>
<dbReference type="UniPathway" id="UPA00940"/>
<dbReference type="Proteomes" id="UP000000775">
    <property type="component" value="Chromosome"/>
</dbReference>
<dbReference type="GO" id="GO:0005829">
    <property type="term" value="C:cytosol"/>
    <property type="evidence" value="ECO:0007669"/>
    <property type="project" value="TreeGrafter"/>
</dbReference>
<dbReference type="GO" id="GO:0047952">
    <property type="term" value="F:glycerol-3-phosphate dehydrogenase [NAD(P)+] activity"/>
    <property type="evidence" value="ECO:0007669"/>
    <property type="project" value="UniProtKB-UniRule"/>
</dbReference>
<dbReference type="GO" id="GO:0051287">
    <property type="term" value="F:NAD binding"/>
    <property type="evidence" value="ECO:0007669"/>
    <property type="project" value="InterPro"/>
</dbReference>
<dbReference type="GO" id="GO:0005975">
    <property type="term" value="P:carbohydrate metabolic process"/>
    <property type="evidence" value="ECO:0007669"/>
    <property type="project" value="InterPro"/>
</dbReference>
<dbReference type="GO" id="GO:0046167">
    <property type="term" value="P:glycerol-3-phosphate biosynthetic process"/>
    <property type="evidence" value="ECO:0007669"/>
    <property type="project" value="UniProtKB-UniRule"/>
</dbReference>
<dbReference type="GO" id="GO:0046168">
    <property type="term" value="P:glycerol-3-phosphate catabolic process"/>
    <property type="evidence" value="ECO:0007669"/>
    <property type="project" value="InterPro"/>
</dbReference>
<dbReference type="GO" id="GO:0006650">
    <property type="term" value="P:glycerophospholipid metabolic process"/>
    <property type="evidence" value="ECO:0007669"/>
    <property type="project" value="UniProtKB-UniRule"/>
</dbReference>
<dbReference type="GO" id="GO:0008654">
    <property type="term" value="P:phospholipid biosynthetic process"/>
    <property type="evidence" value="ECO:0007669"/>
    <property type="project" value="UniProtKB-KW"/>
</dbReference>
<dbReference type="FunFam" id="1.10.1040.10:FF:000025">
    <property type="entry name" value="Glycerol-3-phosphate dehydrogenase [NAD(P)+]"/>
    <property type="match status" value="1"/>
</dbReference>
<dbReference type="Gene3D" id="1.10.1040.10">
    <property type="entry name" value="N-(1-d-carboxylethyl)-l-norvaline Dehydrogenase, domain 2"/>
    <property type="match status" value="1"/>
</dbReference>
<dbReference type="Gene3D" id="3.40.50.720">
    <property type="entry name" value="NAD(P)-binding Rossmann-like Domain"/>
    <property type="match status" value="1"/>
</dbReference>
<dbReference type="HAMAP" id="MF_00394">
    <property type="entry name" value="NAD_Glyc3P_dehydrog"/>
    <property type="match status" value="1"/>
</dbReference>
<dbReference type="InterPro" id="IPR008927">
    <property type="entry name" value="6-PGluconate_DH-like_C_sf"/>
</dbReference>
<dbReference type="InterPro" id="IPR013328">
    <property type="entry name" value="6PGD_dom2"/>
</dbReference>
<dbReference type="InterPro" id="IPR006168">
    <property type="entry name" value="G3P_DH_NAD-dep"/>
</dbReference>
<dbReference type="InterPro" id="IPR006109">
    <property type="entry name" value="G3P_DH_NAD-dep_C"/>
</dbReference>
<dbReference type="InterPro" id="IPR011128">
    <property type="entry name" value="G3P_DH_NAD-dep_N"/>
</dbReference>
<dbReference type="InterPro" id="IPR036291">
    <property type="entry name" value="NAD(P)-bd_dom_sf"/>
</dbReference>
<dbReference type="NCBIfam" id="NF000940">
    <property type="entry name" value="PRK00094.1-2"/>
    <property type="match status" value="1"/>
</dbReference>
<dbReference type="NCBIfam" id="NF000942">
    <property type="entry name" value="PRK00094.1-4"/>
    <property type="match status" value="1"/>
</dbReference>
<dbReference type="NCBIfam" id="NF000943">
    <property type="entry name" value="PRK00094.2-1"/>
    <property type="match status" value="1"/>
</dbReference>
<dbReference type="PANTHER" id="PTHR11728">
    <property type="entry name" value="GLYCEROL-3-PHOSPHATE DEHYDROGENASE"/>
    <property type="match status" value="1"/>
</dbReference>
<dbReference type="PANTHER" id="PTHR11728:SF1">
    <property type="entry name" value="GLYCEROL-3-PHOSPHATE DEHYDROGENASE [NAD(+)] 2, CHLOROPLASTIC"/>
    <property type="match status" value="1"/>
</dbReference>
<dbReference type="Pfam" id="PF07479">
    <property type="entry name" value="NAD_Gly3P_dh_C"/>
    <property type="match status" value="1"/>
</dbReference>
<dbReference type="Pfam" id="PF01210">
    <property type="entry name" value="NAD_Gly3P_dh_N"/>
    <property type="match status" value="1"/>
</dbReference>
<dbReference type="PIRSF" id="PIRSF000114">
    <property type="entry name" value="Glycerol-3-P_dh"/>
    <property type="match status" value="1"/>
</dbReference>
<dbReference type="PRINTS" id="PR00077">
    <property type="entry name" value="GPDHDRGNASE"/>
</dbReference>
<dbReference type="SUPFAM" id="SSF48179">
    <property type="entry name" value="6-phosphogluconate dehydrogenase C-terminal domain-like"/>
    <property type="match status" value="1"/>
</dbReference>
<dbReference type="SUPFAM" id="SSF51735">
    <property type="entry name" value="NAD(P)-binding Rossmann-fold domains"/>
    <property type="match status" value="1"/>
</dbReference>
<dbReference type="PROSITE" id="PS00957">
    <property type="entry name" value="NAD_G3PDH"/>
    <property type="match status" value="1"/>
</dbReference>
<organism>
    <name type="scientific">Helicobacter acinonychis (strain Sheeba)</name>
    <dbReference type="NCBI Taxonomy" id="382638"/>
    <lineage>
        <taxon>Bacteria</taxon>
        <taxon>Pseudomonadati</taxon>
        <taxon>Campylobacterota</taxon>
        <taxon>Epsilonproteobacteria</taxon>
        <taxon>Campylobacterales</taxon>
        <taxon>Helicobacteraceae</taxon>
        <taxon>Helicobacter</taxon>
    </lineage>
</organism>
<accession>Q17X25</accession>
<sequence>MEISVFGGGAWGRALAFAFGEKNEVKIISRRDLNEPLKKLNDALISKGSAPIEQVDLETGLKASLYVVAISVQHLREWFQNASLPKNAKVLIASKGIEVLNKAFVSEIAKDFIEPNHLCFLAGPSFAAEIIQGLPCALVIHSNNQALALEFANKTPSFIRAYAQQDIIGGEIAGAYKNVIAIAGGVCDGLKLGNSAKASLLSRGLVEMQRFGAFFGGKTETFLGLSGAGDLFLTANSILSRNYRVGLGLAQNKPLEVVLEELGEVAEGVKTTNAIVEIAKKYGIYTPIASELALLLKGKSVLESMNDLIRRA</sequence>
<evidence type="ECO:0000255" key="1">
    <source>
        <dbReference type="HAMAP-Rule" id="MF_00394"/>
    </source>
</evidence>